<dbReference type="EC" id="2.3.2.6" evidence="1"/>
<dbReference type="EMBL" id="CP001013">
    <property type="protein sequence ID" value="ACB34245.1"/>
    <property type="molecule type" value="Genomic_DNA"/>
</dbReference>
<dbReference type="RefSeq" id="WP_012347005.1">
    <property type="nucleotide sequence ID" value="NC_010524.1"/>
</dbReference>
<dbReference type="SMR" id="B1Y1E6"/>
<dbReference type="STRING" id="395495.Lcho_1978"/>
<dbReference type="KEGG" id="lch:Lcho_1978"/>
<dbReference type="eggNOG" id="COG2360">
    <property type="taxonomic scope" value="Bacteria"/>
</dbReference>
<dbReference type="HOGENOM" id="CLU_075045_0_0_4"/>
<dbReference type="OrthoDB" id="9790282at2"/>
<dbReference type="Proteomes" id="UP000001693">
    <property type="component" value="Chromosome"/>
</dbReference>
<dbReference type="GO" id="GO:0005737">
    <property type="term" value="C:cytoplasm"/>
    <property type="evidence" value="ECO:0007669"/>
    <property type="project" value="UniProtKB-SubCell"/>
</dbReference>
<dbReference type="GO" id="GO:0008914">
    <property type="term" value="F:leucyl-tRNA--protein transferase activity"/>
    <property type="evidence" value="ECO:0007669"/>
    <property type="project" value="UniProtKB-UniRule"/>
</dbReference>
<dbReference type="GO" id="GO:0030163">
    <property type="term" value="P:protein catabolic process"/>
    <property type="evidence" value="ECO:0007669"/>
    <property type="project" value="UniProtKB-UniRule"/>
</dbReference>
<dbReference type="Gene3D" id="3.40.630.70">
    <property type="entry name" value="Leucyl/phenylalanyl-tRNA-protein transferase, C-terminal domain"/>
    <property type="match status" value="1"/>
</dbReference>
<dbReference type="Gene3D" id="3.30.70.3550">
    <property type="entry name" value="Leucyl/phenylalanyl-tRNA-protein transferase, N-terminal domain"/>
    <property type="match status" value="1"/>
</dbReference>
<dbReference type="HAMAP" id="MF_00688">
    <property type="entry name" value="Leu_Phe_trans"/>
    <property type="match status" value="1"/>
</dbReference>
<dbReference type="InterPro" id="IPR016181">
    <property type="entry name" value="Acyl_CoA_acyltransferase"/>
</dbReference>
<dbReference type="InterPro" id="IPR004616">
    <property type="entry name" value="Leu/Phe-tRNA_Trfase"/>
</dbReference>
<dbReference type="InterPro" id="IPR042203">
    <property type="entry name" value="Leu/Phe-tRNA_Trfase_C"/>
</dbReference>
<dbReference type="InterPro" id="IPR042221">
    <property type="entry name" value="Leu/Phe-tRNA_Trfase_N"/>
</dbReference>
<dbReference type="NCBIfam" id="TIGR00667">
    <property type="entry name" value="aat"/>
    <property type="match status" value="1"/>
</dbReference>
<dbReference type="PANTHER" id="PTHR30098">
    <property type="entry name" value="LEUCYL/PHENYLALANYL-TRNA--PROTEIN TRANSFERASE"/>
    <property type="match status" value="1"/>
</dbReference>
<dbReference type="PANTHER" id="PTHR30098:SF2">
    <property type="entry name" value="LEUCYL_PHENYLALANYL-TRNA--PROTEIN TRANSFERASE"/>
    <property type="match status" value="1"/>
</dbReference>
<dbReference type="Pfam" id="PF03588">
    <property type="entry name" value="Leu_Phe_trans"/>
    <property type="match status" value="1"/>
</dbReference>
<dbReference type="SUPFAM" id="SSF55729">
    <property type="entry name" value="Acyl-CoA N-acyltransferases (Nat)"/>
    <property type="match status" value="1"/>
</dbReference>
<organism>
    <name type="scientific">Leptothrix cholodnii (strain ATCC 51168 / LMG 8142 / SP-6)</name>
    <name type="common">Leptothrix discophora (strain SP-6)</name>
    <dbReference type="NCBI Taxonomy" id="395495"/>
    <lineage>
        <taxon>Bacteria</taxon>
        <taxon>Pseudomonadati</taxon>
        <taxon>Pseudomonadota</taxon>
        <taxon>Betaproteobacteria</taxon>
        <taxon>Burkholderiales</taxon>
        <taxon>Sphaerotilaceae</taxon>
        <taxon>Leptothrix</taxon>
    </lineage>
</organism>
<keyword id="KW-0012">Acyltransferase</keyword>
<keyword id="KW-0963">Cytoplasm</keyword>
<keyword id="KW-1185">Reference proteome</keyword>
<keyword id="KW-0808">Transferase</keyword>
<protein>
    <recommendedName>
        <fullName evidence="1">Leucyl/phenylalanyl-tRNA--protein transferase</fullName>
        <ecNumber evidence="1">2.3.2.6</ecNumber>
    </recommendedName>
    <alternativeName>
        <fullName evidence="1">L/F-transferase</fullName>
    </alternativeName>
    <alternativeName>
        <fullName evidence="1">Leucyltransferase</fullName>
    </alternativeName>
    <alternativeName>
        <fullName evidence="1">Phenyalanyltransferase</fullName>
    </alternativeName>
</protein>
<accession>B1Y1E6</accession>
<comment type="function">
    <text evidence="1">Functions in the N-end rule pathway of protein degradation where it conjugates Leu, Phe and, less efficiently, Met from aminoacyl-tRNAs to the N-termini of proteins containing an N-terminal arginine or lysine.</text>
</comment>
<comment type="catalytic activity">
    <reaction evidence="1">
        <text>N-terminal L-lysyl-[protein] + L-leucyl-tRNA(Leu) = N-terminal L-leucyl-L-lysyl-[protein] + tRNA(Leu) + H(+)</text>
        <dbReference type="Rhea" id="RHEA:12340"/>
        <dbReference type="Rhea" id="RHEA-COMP:9613"/>
        <dbReference type="Rhea" id="RHEA-COMP:9622"/>
        <dbReference type="Rhea" id="RHEA-COMP:12670"/>
        <dbReference type="Rhea" id="RHEA-COMP:12671"/>
        <dbReference type="ChEBI" id="CHEBI:15378"/>
        <dbReference type="ChEBI" id="CHEBI:65249"/>
        <dbReference type="ChEBI" id="CHEBI:78442"/>
        <dbReference type="ChEBI" id="CHEBI:78494"/>
        <dbReference type="ChEBI" id="CHEBI:133043"/>
        <dbReference type="EC" id="2.3.2.6"/>
    </reaction>
</comment>
<comment type="catalytic activity">
    <reaction evidence="1">
        <text>N-terminal L-arginyl-[protein] + L-leucyl-tRNA(Leu) = N-terminal L-leucyl-L-arginyl-[protein] + tRNA(Leu) + H(+)</text>
        <dbReference type="Rhea" id="RHEA:50416"/>
        <dbReference type="Rhea" id="RHEA-COMP:9613"/>
        <dbReference type="Rhea" id="RHEA-COMP:9622"/>
        <dbReference type="Rhea" id="RHEA-COMP:12672"/>
        <dbReference type="Rhea" id="RHEA-COMP:12673"/>
        <dbReference type="ChEBI" id="CHEBI:15378"/>
        <dbReference type="ChEBI" id="CHEBI:64719"/>
        <dbReference type="ChEBI" id="CHEBI:78442"/>
        <dbReference type="ChEBI" id="CHEBI:78494"/>
        <dbReference type="ChEBI" id="CHEBI:133044"/>
        <dbReference type="EC" id="2.3.2.6"/>
    </reaction>
</comment>
<comment type="catalytic activity">
    <reaction evidence="1">
        <text>L-phenylalanyl-tRNA(Phe) + an N-terminal L-alpha-aminoacyl-[protein] = an N-terminal L-phenylalanyl-L-alpha-aminoacyl-[protein] + tRNA(Phe)</text>
        <dbReference type="Rhea" id="RHEA:43632"/>
        <dbReference type="Rhea" id="RHEA-COMP:9668"/>
        <dbReference type="Rhea" id="RHEA-COMP:9699"/>
        <dbReference type="Rhea" id="RHEA-COMP:10636"/>
        <dbReference type="Rhea" id="RHEA-COMP:10637"/>
        <dbReference type="ChEBI" id="CHEBI:78442"/>
        <dbReference type="ChEBI" id="CHEBI:78531"/>
        <dbReference type="ChEBI" id="CHEBI:78597"/>
        <dbReference type="ChEBI" id="CHEBI:83561"/>
        <dbReference type="EC" id="2.3.2.6"/>
    </reaction>
</comment>
<comment type="subcellular location">
    <subcellularLocation>
        <location evidence="1">Cytoplasm</location>
    </subcellularLocation>
</comment>
<comment type="similarity">
    <text evidence="1">Belongs to the L/F-transferase family.</text>
</comment>
<evidence type="ECO:0000255" key="1">
    <source>
        <dbReference type="HAMAP-Rule" id="MF_00688"/>
    </source>
</evidence>
<evidence type="ECO:0000256" key="2">
    <source>
        <dbReference type="SAM" id="MobiDB-lite"/>
    </source>
</evidence>
<reference key="1">
    <citation type="submission" date="2008-03" db="EMBL/GenBank/DDBJ databases">
        <title>Complete sequence of Leptothrix cholodnii SP-6.</title>
        <authorList>
            <consortium name="US DOE Joint Genome Institute"/>
            <person name="Copeland A."/>
            <person name="Lucas S."/>
            <person name="Lapidus A."/>
            <person name="Glavina del Rio T."/>
            <person name="Dalin E."/>
            <person name="Tice H."/>
            <person name="Bruce D."/>
            <person name="Goodwin L."/>
            <person name="Pitluck S."/>
            <person name="Chertkov O."/>
            <person name="Brettin T."/>
            <person name="Detter J.C."/>
            <person name="Han C."/>
            <person name="Kuske C.R."/>
            <person name="Schmutz J."/>
            <person name="Larimer F."/>
            <person name="Land M."/>
            <person name="Hauser L."/>
            <person name="Kyrpides N."/>
            <person name="Lykidis A."/>
            <person name="Emerson D."/>
            <person name="Richardson P."/>
        </authorList>
    </citation>
    <scope>NUCLEOTIDE SEQUENCE [LARGE SCALE GENOMIC DNA]</scope>
    <source>
        <strain>ATCC 51168 / LMG 8142 / SP-6</strain>
    </source>
</reference>
<feature type="chain" id="PRO_1000131930" description="Leucyl/phenylalanyl-tRNA--protein transferase">
    <location>
        <begin position="1"/>
        <end position="256"/>
    </location>
</feature>
<feature type="region of interest" description="Disordered" evidence="2">
    <location>
        <begin position="1"/>
        <end position="21"/>
    </location>
</feature>
<proteinExistence type="inferred from homology"/>
<name>LFTR_LEPCP</name>
<gene>
    <name evidence="1" type="primary">aat</name>
    <name type="ordered locus">Lcho_1978</name>
</gene>
<sequence>MIPWLPDDSDSAPFPPTRLALGPDSEAPGLLCAGGQLSVARLRMAYRLGIFPWYSQGQPVLWWSTDPRMVLQVAQFRLHRSLKKTLRRFLVTPGNEVRIDSAFADVIDHCSRTPREGQDGTWIVPEVKAAYVALHRAGSAHSFETWVDGELVGGLYGVNIGRMFYGESMFARRTDASKIALAALVAFCLAHEIAWIDCQMETEHLASLGAQPVPRAQFEAHLRRVVDLPAPKDWFYDPSSWARLGDRGPGQPSPSA</sequence>